<reference key="1">
    <citation type="submission" date="2007-08" db="EMBL/GenBank/DDBJ databases">
        <title>Complete sequence of Thermotoga lettingae TMO.</title>
        <authorList>
            <consortium name="US DOE Joint Genome Institute"/>
            <person name="Copeland A."/>
            <person name="Lucas S."/>
            <person name="Lapidus A."/>
            <person name="Barry K."/>
            <person name="Glavina del Rio T."/>
            <person name="Dalin E."/>
            <person name="Tice H."/>
            <person name="Pitluck S."/>
            <person name="Foster B."/>
            <person name="Bruce D."/>
            <person name="Schmutz J."/>
            <person name="Larimer F."/>
            <person name="Land M."/>
            <person name="Hauser L."/>
            <person name="Kyrpides N."/>
            <person name="Mikhailova N."/>
            <person name="Nelson K."/>
            <person name="Gogarten J.P."/>
            <person name="Noll K."/>
            <person name="Richardson P."/>
        </authorList>
    </citation>
    <scope>NUCLEOTIDE SEQUENCE [LARGE SCALE GENOMIC DNA]</scope>
    <source>
        <strain>ATCC BAA-301 / DSM 14385 / NBRC 107922 / TMO</strain>
    </source>
</reference>
<accession>A8F4D7</accession>
<sequence length="187" mass="21271">MKVIVGLGNPGPRYAFNRHNVGFMFVDRFKEFKKCSTWQHRDRYTFSQCKDIFLVKPNTFMNLSGIAVIKCQRDFHVTTTDIIVVYDDVDLPCGRLRIKAQGGSGGHRGLQSIIDYIGTNEFVRLRIGIGPKPENIDLADYVLEDFTEEELRLIDKVLDKAVEAVDVMLNEGLSKAMSVFNSYEVVL</sequence>
<comment type="function">
    <text evidence="1">Hydrolyzes ribosome-free peptidyl-tRNAs (with 1 or more amino acids incorporated), which drop off the ribosome during protein synthesis, or as a result of ribosome stalling.</text>
</comment>
<comment type="function">
    <text evidence="1">Catalyzes the release of premature peptidyl moieties from peptidyl-tRNA molecules trapped in stalled 50S ribosomal subunits, and thus maintains levels of free tRNAs and 50S ribosomes.</text>
</comment>
<comment type="catalytic activity">
    <reaction evidence="1">
        <text>an N-acyl-L-alpha-aminoacyl-tRNA + H2O = an N-acyl-L-amino acid + a tRNA + H(+)</text>
        <dbReference type="Rhea" id="RHEA:54448"/>
        <dbReference type="Rhea" id="RHEA-COMP:10123"/>
        <dbReference type="Rhea" id="RHEA-COMP:13883"/>
        <dbReference type="ChEBI" id="CHEBI:15377"/>
        <dbReference type="ChEBI" id="CHEBI:15378"/>
        <dbReference type="ChEBI" id="CHEBI:59874"/>
        <dbReference type="ChEBI" id="CHEBI:78442"/>
        <dbReference type="ChEBI" id="CHEBI:138191"/>
        <dbReference type="EC" id="3.1.1.29"/>
    </reaction>
</comment>
<comment type="subunit">
    <text evidence="1">Monomer.</text>
</comment>
<comment type="subcellular location">
    <subcellularLocation>
        <location evidence="1">Cytoplasm</location>
    </subcellularLocation>
</comment>
<comment type="similarity">
    <text evidence="1">Belongs to the PTH family.</text>
</comment>
<protein>
    <recommendedName>
        <fullName evidence="1">Peptidyl-tRNA hydrolase</fullName>
        <shortName evidence="1">Pth</shortName>
        <ecNumber evidence="1">3.1.1.29</ecNumber>
    </recommendedName>
</protein>
<keyword id="KW-0963">Cytoplasm</keyword>
<keyword id="KW-0378">Hydrolase</keyword>
<keyword id="KW-1185">Reference proteome</keyword>
<keyword id="KW-0694">RNA-binding</keyword>
<keyword id="KW-0820">tRNA-binding</keyword>
<evidence type="ECO:0000255" key="1">
    <source>
        <dbReference type="HAMAP-Rule" id="MF_00083"/>
    </source>
</evidence>
<feature type="chain" id="PRO_1000071232" description="Peptidyl-tRNA hydrolase">
    <location>
        <begin position="1"/>
        <end position="187"/>
    </location>
</feature>
<feature type="active site" description="Proton acceptor" evidence="1">
    <location>
        <position position="19"/>
    </location>
</feature>
<feature type="binding site" evidence="1">
    <location>
        <position position="14"/>
    </location>
    <ligand>
        <name>tRNA</name>
        <dbReference type="ChEBI" id="CHEBI:17843"/>
    </ligand>
</feature>
<feature type="binding site" evidence="1">
    <location>
        <position position="60"/>
    </location>
    <ligand>
        <name>tRNA</name>
        <dbReference type="ChEBI" id="CHEBI:17843"/>
    </ligand>
</feature>
<feature type="binding site" evidence="1">
    <location>
        <position position="62"/>
    </location>
    <ligand>
        <name>tRNA</name>
        <dbReference type="ChEBI" id="CHEBI:17843"/>
    </ligand>
</feature>
<feature type="site" description="Discriminates between blocked and unblocked aminoacyl-tRNA" evidence="1">
    <location>
        <position position="9"/>
    </location>
</feature>
<feature type="site" description="Stabilizes the basic form of H active site to accept a proton" evidence="1">
    <location>
        <position position="87"/>
    </location>
</feature>
<dbReference type="EC" id="3.1.1.29" evidence="1"/>
<dbReference type="EMBL" id="CP000812">
    <property type="protein sequence ID" value="ABV33021.1"/>
    <property type="molecule type" value="Genomic_DNA"/>
</dbReference>
<dbReference type="RefSeq" id="WP_012002502.1">
    <property type="nucleotide sequence ID" value="NZ_BSDV01000001.1"/>
</dbReference>
<dbReference type="SMR" id="A8F4D7"/>
<dbReference type="STRING" id="416591.Tlet_0454"/>
<dbReference type="KEGG" id="tle:Tlet_0454"/>
<dbReference type="eggNOG" id="COG0193">
    <property type="taxonomic scope" value="Bacteria"/>
</dbReference>
<dbReference type="HOGENOM" id="CLU_062456_4_1_0"/>
<dbReference type="OrthoDB" id="9800507at2"/>
<dbReference type="Proteomes" id="UP000002016">
    <property type="component" value="Chromosome"/>
</dbReference>
<dbReference type="GO" id="GO:0005737">
    <property type="term" value="C:cytoplasm"/>
    <property type="evidence" value="ECO:0007669"/>
    <property type="project" value="UniProtKB-SubCell"/>
</dbReference>
<dbReference type="GO" id="GO:0004045">
    <property type="term" value="F:peptidyl-tRNA hydrolase activity"/>
    <property type="evidence" value="ECO:0007669"/>
    <property type="project" value="UniProtKB-UniRule"/>
</dbReference>
<dbReference type="GO" id="GO:0000049">
    <property type="term" value="F:tRNA binding"/>
    <property type="evidence" value="ECO:0007669"/>
    <property type="project" value="UniProtKB-UniRule"/>
</dbReference>
<dbReference type="GO" id="GO:0006515">
    <property type="term" value="P:protein quality control for misfolded or incompletely synthesized proteins"/>
    <property type="evidence" value="ECO:0007669"/>
    <property type="project" value="UniProtKB-UniRule"/>
</dbReference>
<dbReference type="GO" id="GO:0072344">
    <property type="term" value="P:rescue of stalled ribosome"/>
    <property type="evidence" value="ECO:0007669"/>
    <property type="project" value="UniProtKB-UniRule"/>
</dbReference>
<dbReference type="CDD" id="cd00462">
    <property type="entry name" value="PTH"/>
    <property type="match status" value="1"/>
</dbReference>
<dbReference type="FunFam" id="3.40.50.1470:FF:000001">
    <property type="entry name" value="Peptidyl-tRNA hydrolase"/>
    <property type="match status" value="1"/>
</dbReference>
<dbReference type="Gene3D" id="3.40.50.1470">
    <property type="entry name" value="Peptidyl-tRNA hydrolase"/>
    <property type="match status" value="1"/>
</dbReference>
<dbReference type="HAMAP" id="MF_00083">
    <property type="entry name" value="Pept_tRNA_hydro_bact"/>
    <property type="match status" value="1"/>
</dbReference>
<dbReference type="InterPro" id="IPR001328">
    <property type="entry name" value="Pept_tRNA_hydro"/>
</dbReference>
<dbReference type="InterPro" id="IPR018171">
    <property type="entry name" value="Pept_tRNA_hydro_CS"/>
</dbReference>
<dbReference type="InterPro" id="IPR036416">
    <property type="entry name" value="Pept_tRNA_hydro_sf"/>
</dbReference>
<dbReference type="NCBIfam" id="TIGR00447">
    <property type="entry name" value="pth"/>
    <property type="match status" value="1"/>
</dbReference>
<dbReference type="PANTHER" id="PTHR17224">
    <property type="entry name" value="PEPTIDYL-TRNA HYDROLASE"/>
    <property type="match status" value="1"/>
</dbReference>
<dbReference type="PANTHER" id="PTHR17224:SF1">
    <property type="entry name" value="PEPTIDYL-TRNA HYDROLASE"/>
    <property type="match status" value="1"/>
</dbReference>
<dbReference type="Pfam" id="PF01195">
    <property type="entry name" value="Pept_tRNA_hydro"/>
    <property type="match status" value="1"/>
</dbReference>
<dbReference type="SUPFAM" id="SSF53178">
    <property type="entry name" value="Peptidyl-tRNA hydrolase-like"/>
    <property type="match status" value="1"/>
</dbReference>
<dbReference type="PROSITE" id="PS01195">
    <property type="entry name" value="PEPT_TRNA_HYDROL_1"/>
    <property type="match status" value="1"/>
</dbReference>
<organism>
    <name type="scientific">Pseudothermotoga lettingae (strain ATCC BAA-301 / DSM 14385 / NBRC 107922 / TMO)</name>
    <name type="common">Thermotoga lettingae</name>
    <dbReference type="NCBI Taxonomy" id="416591"/>
    <lineage>
        <taxon>Bacteria</taxon>
        <taxon>Thermotogati</taxon>
        <taxon>Thermotogota</taxon>
        <taxon>Thermotogae</taxon>
        <taxon>Thermotogales</taxon>
        <taxon>Thermotogaceae</taxon>
        <taxon>Pseudothermotoga</taxon>
    </lineage>
</organism>
<gene>
    <name evidence="1" type="primary">pth</name>
    <name type="ordered locus">Tlet_0454</name>
</gene>
<name>PTH_PSELT</name>
<proteinExistence type="inferred from homology"/>